<organism evidence="10">
    <name type="scientific">Drosophila melanogaster</name>
    <name type="common">Fruit fly</name>
    <dbReference type="NCBI Taxonomy" id="7227"/>
    <lineage>
        <taxon>Eukaryota</taxon>
        <taxon>Metazoa</taxon>
        <taxon>Ecdysozoa</taxon>
        <taxon>Arthropoda</taxon>
        <taxon>Hexapoda</taxon>
        <taxon>Insecta</taxon>
        <taxon>Pterygota</taxon>
        <taxon>Neoptera</taxon>
        <taxon>Endopterygota</taxon>
        <taxon>Diptera</taxon>
        <taxon>Brachycera</taxon>
        <taxon>Muscomorpha</taxon>
        <taxon>Ephydroidea</taxon>
        <taxon>Drosophilidae</taxon>
        <taxon>Drosophila</taxon>
        <taxon>Sophophora</taxon>
    </lineage>
</organism>
<evidence type="ECO:0000250" key="1">
    <source>
        <dbReference type="UniProtKB" id="Q96CU9"/>
    </source>
</evidence>
<evidence type="ECO:0000255" key="2"/>
<evidence type="ECO:0000256" key="3">
    <source>
        <dbReference type="SAM" id="MobiDB-lite"/>
    </source>
</evidence>
<evidence type="ECO:0000269" key="4">
    <source>
    </source>
</evidence>
<evidence type="ECO:0000303" key="5">
    <source>
    </source>
</evidence>
<evidence type="ECO:0000305" key="6"/>
<evidence type="ECO:0000305" key="7">
    <source>
    </source>
</evidence>
<evidence type="ECO:0000312" key="8">
    <source>
        <dbReference type="EMBL" id="AAM29424.1"/>
    </source>
</evidence>
<evidence type="ECO:0000312" key="9">
    <source>
        <dbReference type="FlyBase" id="FBgn0002021"/>
    </source>
</evidence>
<evidence type="ECO:0000312" key="10">
    <source>
        <dbReference type="Proteomes" id="UP000000803"/>
    </source>
</evidence>
<dbReference type="EMBL" id="AE014134">
    <property type="protein sequence ID" value="AAF53748.1"/>
    <property type="molecule type" value="Genomic_DNA"/>
</dbReference>
<dbReference type="EMBL" id="AY113419">
    <property type="protein sequence ID" value="AAM29424.1"/>
    <property type="molecule type" value="mRNA"/>
</dbReference>
<dbReference type="RefSeq" id="NP_536791.1">
    <property type="nucleotide sequence ID" value="NM_080530.3"/>
</dbReference>
<dbReference type="SMR" id="Q9VJ10"/>
<dbReference type="FunCoup" id="Q9VJ10">
    <property type="interactions" value="581"/>
</dbReference>
<dbReference type="STRING" id="7227.FBpp0080719"/>
<dbReference type="PaxDb" id="7227-FBpp0080719"/>
<dbReference type="DNASU" id="49427"/>
<dbReference type="EnsemblMetazoa" id="FBtr0081177">
    <property type="protein sequence ID" value="FBpp0080719"/>
    <property type="gene ID" value="FBgn0002021"/>
</dbReference>
<dbReference type="GeneID" id="49427"/>
<dbReference type="KEGG" id="dme:Dmel_CG10655"/>
<dbReference type="UCSC" id="CG10655-RA">
    <property type="organism name" value="d. melanogaster"/>
</dbReference>
<dbReference type="AGR" id="FB:FBgn0002021"/>
<dbReference type="FlyBase" id="FBgn0002021">
    <property type="gene designation" value="l(2)37Bb"/>
</dbReference>
<dbReference type="VEuPathDB" id="VectorBase:FBgn0002021"/>
<dbReference type="eggNOG" id="KOG2853">
    <property type="taxonomic scope" value="Eukaryota"/>
</dbReference>
<dbReference type="GeneTree" id="ENSGT00940000168582"/>
<dbReference type="HOGENOM" id="CLU_007884_4_4_1"/>
<dbReference type="InParanoid" id="Q9VJ10"/>
<dbReference type="OMA" id="IMDGQFR"/>
<dbReference type="OrthoDB" id="424974at2759"/>
<dbReference type="BioGRID-ORCS" id="49427">
    <property type="hits" value="0 hits in 1 CRISPR screen"/>
</dbReference>
<dbReference type="Proteomes" id="UP000000803">
    <property type="component" value="Chromosome 2L"/>
</dbReference>
<dbReference type="Bgee" id="FBgn0002021">
    <property type="expression patterns" value="Expressed in thoracico-abdominal ganglion (Drosophila) and 75 other cell types or tissues"/>
</dbReference>
<dbReference type="GO" id="GO:0005737">
    <property type="term" value="C:cytoplasm"/>
    <property type="evidence" value="ECO:0000318"/>
    <property type="project" value="GO_Central"/>
</dbReference>
<dbReference type="GO" id="GO:0005743">
    <property type="term" value="C:mitochondrial inner membrane"/>
    <property type="evidence" value="ECO:0007669"/>
    <property type="project" value="UniProtKB-SubCell"/>
</dbReference>
<dbReference type="GO" id="GO:0005739">
    <property type="term" value="C:mitochondrion"/>
    <property type="evidence" value="ECO:0000314"/>
    <property type="project" value="FlyBase"/>
</dbReference>
<dbReference type="GO" id="GO:0016491">
    <property type="term" value="F:oxidoreductase activity"/>
    <property type="evidence" value="ECO:0007669"/>
    <property type="project" value="UniProtKB-KW"/>
</dbReference>
<dbReference type="GO" id="GO:0032981">
    <property type="term" value="P:mitochondrial respiratory chain complex I assembly"/>
    <property type="evidence" value="ECO:0000318"/>
    <property type="project" value="GO_Central"/>
</dbReference>
<dbReference type="Gene3D" id="3.30.9.10">
    <property type="entry name" value="D-Amino Acid Oxidase, subunit A, domain 2"/>
    <property type="match status" value="1"/>
</dbReference>
<dbReference type="Gene3D" id="3.50.50.60">
    <property type="entry name" value="FAD/NAD(P)-binding domain"/>
    <property type="match status" value="1"/>
</dbReference>
<dbReference type="InterPro" id="IPR006076">
    <property type="entry name" value="FAD-dep_OxRdtase"/>
</dbReference>
<dbReference type="InterPro" id="IPR036188">
    <property type="entry name" value="FAD/NAD-bd_sf"/>
</dbReference>
<dbReference type="PANTHER" id="PTHR13847:SF282">
    <property type="entry name" value="LETHAL (2) 37BB"/>
    <property type="match status" value="1"/>
</dbReference>
<dbReference type="PANTHER" id="PTHR13847">
    <property type="entry name" value="SARCOSINE DEHYDROGENASE-RELATED"/>
    <property type="match status" value="1"/>
</dbReference>
<dbReference type="Pfam" id="PF01266">
    <property type="entry name" value="DAO"/>
    <property type="match status" value="1"/>
</dbReference>
<dbReference type="SUPFAM" id="SSF51905">
    <property type="entry name" value="FAD/NAD(P)-binding domain"/>
    <property type="match status" value="1"/>
</dbReference>
<comment type="function">
    <text evidence="7">Involved in the assembly of the mitochondrial membrane respiratory chain NADH dehydrogenase (Complex I).</text>
</comment>
<comment type="cofactor">
    <cofactor evidence="6">
        <name>FAD</name>
        <dbReference type="ChEBI" id="CHEBI:57692"/>
    </cofactor>
</comment>
<comment type="subunit">
    <text evidence="4">Associates with mitochondrial complex I assembly intermediates during its biogenesis.</text>
</comment>
<comment type="subcellular location">
    <subcellularLocation>
        <location evidence="1">Mitochondrion inner membrane</location>
        <topology evidence="2">Single-pass membrane protein</topology>
    </subcellularLocation>
</comment>
<protein>
    <recommendedName>
        <fullName evidence="5">FAD-dependent oxidoreductase domain-containing protein 1 homolog</fullName>
        <shortName evidence="5">dFOXRED1</shortName>
    </recommendedName>
    <alternativeName>
        <fullName evidence="9">Protein lethal (2) 37Bb</fullName>
    </alternativeName>
</protein>
<reference evidence="10" key="1">
    <citation type="journal article" date="2000" name="Science">
        <title>The genome sequence of Drosophila melanogaster.</title>
        <authorList>
            <person name="Adams M.D."/>
            <person name="Celniker S.E."/>
            <person name="Holt R.A."/>
            <person name="Evans C.A."/>
            <person name="Gocayne J.D."/>
            <person name="Amanatides P.G."/>
            <person name="Scherer S.E."/>
            <person name="Li P.W."/>
            <person name="Hoskins R.A."/>
            <person name="Galle R.F."/>
            <person name="George R.A."/>
            <person name="Lewis S.E."/>
            <person name="Richards S."/>
            <person name="Ashburner M."/>
            <person name="Henderson S.N."/>
            <person name="Sutton G.G."/>
            <person name="Wortman J.R."/>
            <person name="Yandell M.D."/>
            <person name="Zhang Q."/>
            <person name="Chen L.X."/>
            <person name="Brandon R.C."/>
            <person name="Rogers Y.-H.C."/>
            <person name="Blazej R.G."/>
            <person name="Champe M."/>
            <person name="Pfeiffer B.D."/>
            <person name="Wan K.H."/>
            <person name="Doyle C."/>
            <person name="Baxter E.G."/>
            <person name="Helt G."/>
            <person name="Nelson C.R."/>
            <person name="Miklos G.L.G."/>
            <person name="Abril J.F."/>
            <person name="Agbayani A."/>
            <person name="An H.-J."/>
            <person name="Andrews-Pfannkoch C."/>
            <person name="Baldwin D."/>
            <person name="Ballew R.M."/>
            <person name="Basu A."/>
            <person name="Baxendale J."/>
            <person name="Bayraktaroglu L."/>
            <person name="Beasley E.M."/>
            <person name="Beeson K.Y."/>
            <person name="Benos P.V."/>
            <person name="Berman B.P."/>
            <person name="Bhandari D."/>
            <person name="Bolshakov S."/>
            <person name="Borkova D."/>
            <person name="Botchan M.R."/>
            <person name="Bouck J."/>
            <person name="Brokstein P."/>
            <person name="Brottier P."/>
            <person name="Burtis K.C."/>
            <person name="Busam D.A."/>
            <person name="Butler H."/>
            <person name="Cadieu E."/>
            <person name="Center A."/>
            <person name="Chandra I."/>
            <person name="Cherry J.M."/>
            <person name="Cawley S."/>
            <person name="Dahlke C."/>
            <person name="Davenport L.B."/>
            <person name="Davies P."/>
            <person name="de Pablos B."/>
            <person name="Delcher A."/>
            <person name="Deng Z."/>
            <person name="Mays A.D."/>
            <person name="Dew I."/>
            <person name="Dietz S.M."/>
            <person name="Dodson K."/>
            <person name="Doup L.E."/>
            <person name="Downes M."/>
            <person name="Dugan-Rocha S."/>
            <person name="Dunkov B.C."/>
            <person name="Dunn P."/>
            <person name="Durbin K.J."/>
            <person name="Evangelista C.C."/>
            <person name="Ferraz C."/>
            <person name="Ferriera S."/>
            <person name="Fleischmann W."/>
            <person name="Fosler C."/>
            <person name="Gabrielian A.E."/>
            <person name="Garg N.S."/>
            <person name="Gelbart W.M."/>
            <person name="Glasser K."/>
            <person name="Glodek A."/>
            <person name="Gong F."/>
            <person name="Gorrell J.H."/>
            <person name="Gu Z."/>
            <person name="Guan P."/>
            <person name="Harris M."/>
            <person name="Harris N.L."/>
            <person name="Harvey D.A."/>
            <person name="Heiman T.J."/>
            <person name="Hernandez J.R."/>
            <person name="Houck J."/>
            <person name="Hostin D."/>
            <person name="Houston K.A."/>
            <person name="Howland T.J."/>
            <person name="Wei M.-H."/>
            <person name="Ibegwam C."/>
            <person name="Jalali M."/>
            <person name="Kalush F."/>
            <person name="Karpen G.H."/>
            <person name="Ke Z."/>
            <person name="Kennison J.A."/>
            <person name="Ketchum K.A."/>
            <person name="Kimmel B.E."/>
            <person name="Kodira C.D."/>
            <person name="Kraft C.L."/>
            <person name="Kravitz S."/>
            <person name="Kulp D."/>
            <person name="Lai Z."/>
            <person name="Lasko P."/>
            <person name="Lei Y."/>
            <person name="Levitsky A.A."/>
            <person name="Li J.H."/>
            <person name="Li Z."/>
            <person name="Liang Y."/>
            <person name="Lin X."/>
            <person name="Liu X."/>
            <person name="Mattei B."/>
            <person name="McIntosh T.C."/>
            <person name="McLeod M.P."/>
            <person name="McPherson D."/>
            <person name="Merkulov G."/>
            <person name="Milshina N.V."/>
            <person name="Mobarry C."/>
            <person name="Morris J."/>
            <person name="Moshrefi A."/>
            <person name="Mount S.M."/>
            <person name="Moy M."/>
            <person name="Murphy B."/>
            <person name="Murphy L."/>
            <person name="Muzny D.M."/>
            <person name="Nelson D.L."/>
            <person name="Nelson D.R."/>
            <person name="Nelson K.A."/>
            <person name="Nixon K."/>
            <person name="Nusskern D.R."/>
            <person name="Pacleb J.M."/>
            <person name="Palazzolo M."/>
            <person name="Pittman G.S."/>
            <person name="Pan S."/>
            <person name="Pollard J."/>
            <person name="Puri V."/>
            <person name="Reese M.G."/>
            <person name="Reinert K."/>
            <person name="Remington K."/>
            <person name="Saunders R.D.C."/>
            <person name="Scheeler F."/>
            <person name="Shen H."/>
            <person name="Shue B.C."/>
            <person name="Siden-Kiamos I."/>
            <person name="Simpson M."/>
            <person name="Skupski M.P."/>
            <person name="Smith T.J."/>
            <person name="Spier E."/>
            <person name="Spradling A.C."/>
            <person name="Stapleton M."/>
            <person name="Strong R."/>
            <person name="Sun E."/>
            <person name="Svirskas R."/>
            <person name="Tector C."/>
            <person name="Turner R."/>
            <person name="Venter E."/>
            <person name="Wang A.H."/>
            <person name="Wang X."/>
            <person name="Wang Z.-Y."/>
            <person name="Wassarman D.A."/>
            <person name="Weinstock G.M."/>
            <person name="Weissenbach J."/>
            <person name="Williams S.M."/>
            <person name="Woodage T."/>
            <person name="Worley K.C."/>
            <person name="Wu D."/>
            <person name="Yang S."/>
            <person name="Yao Q.A."/>
            <person name="Ye J."/>
            <person name="Yeh R.-F."/>
            <person name="Zaveri J.S."/>
            <person name="Zhan M."/>
            <person name="Zhang G."/>
            <person name="Zhao Q."/>
            <person name="Zheng L."/>
            <person name="Zheng X.H."/>
            <person name="Zhong F.N."/>
            <person name="Zhong W."/>
            <person name="Zhou X."/>
            <person name="Zhu S.C."/>
            <person name="Zhu X."/>
            <person name="Smith H.O."/>
            <person name="Gibbs R.A."/>
            <person name="Myers E.W."/>
            <person name="Rubin G.M."/>
            <person name="Venter J.C."/>
        </authorList>
    </citation>
    <scope>NUCLEOTIDE SEQUENCE [LARGE SCALE GENOMIC DNA]</scope>
    <source>
        <strain evidence="10">Berkeley</strain>
    </source>
</reference>
<reference evidence="10" key="2">
    <citation type="journal article" date="2002" name="Genome Biol.">
        <title>Annotation of the Drosophila melanogaster euchromatic genome: a systematic review.</title>
        <authorList>
            <person name="Misra S."/>
            <person name="Crosby M.A."/>
            <person name="Mungall C.J."/>
            <person name="Matthews B.B."/>
            <person name="Campbell K.S."/>
            <person name="Hradecky P."/>
            <person name="Huang Y."/>
            <person name="Kaminker J.S."/>
            <person name="Millburn G.H."/>
            <person name="Prochnik S.E."/>
            <person name="Smith C.D."/>
            <person name="Tupy J.L."/>
            <person name="Whitfield E.J."/>
            <person name="Bayraktaroglu L."/>
            <person name="Berman B.P."/>
            <person name="Bettencourt B.R."/>
            <person name="Celniker S.E."/>
            <person name="de Grey A.D.N.J."/>
            <person name="Drysdale R.A."/>
            <person name="Harris N.L."/>
            <person name="Richter J."/>
            <person name="Russo S."/>
            <person name="Schroeder A.J."/>
            <person name="Shu S.Q."/>
            <person name="Stapleton M."/>
            <person name="Yamada C."/>
            <person name="Ashburner M."/>
            <person name="Gelbart W.M."/>
            <person name="Rubin G.M."/>
            <person name="Lewis S.E."/>
        </authorList>
    </citation>
    <scope>GENOME REANNOTATION</scope>
    <source>
        <strain evidence="10">Berkeley</strain>
    </source>
</reference>
<reference evidence="8" key="3">
    <citation type="journal article" date="2002" name="Genome Biol.">
        <title>A Drosophila full-length cDNA resource.</title>
        <authorList>
            <person name="Stapleton M."/>
            <person name="Carlson J.W."/>
            <person name="Brokstein P."/>
            <person name="Yu C."/>
            <person name="Champe M."/>
            <person name="George R.A."/>
            <person name="Guarin H."/>
            <person name="Kronmiller B."/>
            <person name="Pacleb J.M."/>
            <person name="Park S."/>
            <person name="Wan K.H."/>
            <person name="Rubin G.M."/>
            <person name="Celniker S.E."/>
        </authorList>
    </citation>
    <scope>NUCLEOTIDE SEQUENCE [LARGE SCALE MRNA]</scope>
    <source>
        <strain evidence="8">Berkeley</strain>
        <tissue evidence="8">Embryo</tissue>
    </source>
</reference>
<reference evidence="6" key="4">
    <citation type="journal article" date="2021" name="IScience">
        <title>Dissecting the concordant and disparate roles of NDUFAF3 and NDUFAF4 in mitochondrial complex I biogenesis.</title>
        <authorList>
            <person name="Murari A."/>
            <person name="Rhooms S.K."/>
            <person name="Garcia C."/>
            <person name="Liu T."/>
            <person name="Li H."/>
            <person name="Mishra B."/>
            <person name="Deshong C."/>
            <person name="Owusu-Ansah E."/>
        </authorList>
    </citation>
    <scope>FUNCTION</scope>
    <scope>INTERACTION WITH COMPLEX 1</scope>
</reference>
<gene>
    <name evidence="9" type="primary">l(2)37Bb</name>
    <name evidence="9" type="synonym">Bb</name>
    <name evidence="9" type="synonym">l(2)35B2</name>
    <name evidence="9" type="ORF">CG10655</name>
</gene>
<proteinExistence type="evidence at protein level"/>
<name>FXRD1_DROME</name>
<accession>Q9VJ10</accession>
<feature type="chain" id="PRO_0000461814" description="FAD-dependent oxidoreductase domain-containing protein 1 homolog">
    <location>
        <begin position="1"/>
        <end position="515"/>
    </location>
</feature>
<feature type="transmembrane region" description="Helical" evidence="2">
    <location>
        <begin position="100"/>
        <end position="116"/>
    </location>
</feature>
<feature type="region of interest" description="Disordered" evidence="3">
    <location>
        <begin position="18"/>
        <end position="37"/>
    </location>
</feature>
<sequence>MLRYRQVVGLLQRRNFSAGATSNGSGSSGGDKSGEDLHPIRRTLRLLGNDMRKVKEFFVPKEPETEKVPIPTQSQFHFSGERDKSKEATVPDDFQTHCDVLIIGGGGVGSSIAYWLKEKARDGLNVVVVEKDDTYAQSATRVSVGGLCQQFSLPENIQMSLFAADFLRSARKHFGEEVPLQFTPHGHLMLAGEEHAESLKRSSQLQNELGARNELLTADRLTARFPWLNTKGIALGCLGLEKEGWFNPLALLSNFRRSASGYGAHFISGQVVDFEFKSQTDISVVTDLGSNEGAYTGLEKAVIQLPDGTRRTCKFALCVISAGASSEQIARLARIGVGPGILRVPLPINARKRYMYAINSQAQSAPGMNMPMTIDPSGIFIRRDGLGGNYICVQDSTEEYNSAMIDPQYFAQHIRPHLYNRIPVLGEAQVVDSWAGCYDHNVYDENGILGAHPYYNNLYLATGFSGHGVQQSLAVGRAISELIMDGQFRTIDLSRLSFDRLIVDQPMFELNNVLS</sequence>
<keyword id="KW-0472">Membrane</keyword>
<keyword id="KW-0496">Mitochondrion</keyword>
<keyword id="KW-0999">Mitochondrion inner membrane</keyword>
<keyword id="KW-0560">Oxidoreductase</keyword>
<keyword id="KW-1185">Reference proteome</keyword>
<keyword id="KW-0812">Transmembrane</keyword>
<keyword id="KW-1133">Transmembrane helix</keyword>